<keyword id="KW-0963">Cytoplasm</keyword>
<keyword id="KW-0342">GTP-binding</keyword>
<keyword id="KW-0378">Hydrolase</keyword>
<keyword id="KW-0479">Metal-binding</keyword>
<keyword id="KW-0547">Nucleotide-binding</keyword>
<keyword id="KW-0690">Ribosome biogenesis</keyword>
<keyword id="KW-0694">RNA-binding</keyword>
<keyword id="KW-0699">rRNA-binding</keyword>
<keyword id="KW-0862">Zinc</keyword>
<name>RSGA_ECOHS</name>
<reference key="1">
    <citation type="journal article" date="2008" name="J. Bacteriol.">
        <title>The pangenome structure of Escherichia coli: comparative genomic analysis of E. coli commensal and pathogenic isolates.</title>
        <authorList>
            <person name="Rasko D.A."/>
            <person name="Rosovitz M.J."/>
            <person name="Myers G.S.A."/>
            <person name="Mongodin E.F."/>
            <person name="Fricke W.F."/>
            <person name="Gajer P."/>
            <person name="Crabtree J."/>
            <person name="Sebaihia M."/>
            <person name="Thomson N.R."/>
            <person name="Chaudhuri R."/>
            <person name="Henderson I.R."/>
            <person name="Sperandio V."/>
            <person name="Ravel J."/>
        </authorList>
    </citation>
    <scope>NUCLEOTIDE SEQUENCE [LARGE SCALE GENOMIC DNA]</scope>
    <source>
        <strain>HS</strain>
    </source>
</reference>
<dbReference type="EC" id="3.6.1.-" evidence="1"/>
<dbReference type="EMBL" id="CP000802">
    <property type="protein sequence ID" value="ABV08562.1"/>
    <property type="molecule type" value="Genomic_DNA"/>
</dbReference>
<dbReference type="RefSeq" id="WP_000041970.1">
    <property type="nucleotide sequence ID" value="NC_009800.1"/>
</dbReference>
<dbReference type="SMR" id="A8A7Q8"/>
<dbReference type="GeneID" id="93777661"/>
<dbReference type="KEGG" id="ecx:EcHS_A4404"/>
<dbReference type="HOGENOM" id="CLU_033617_2_0_6"/>
<dbReference type="GO" id="GO:0005737">
    <property type="term" value="C:cytoplasm"/>
    <property type="evidence" value="ECO:0007669"/>
    <property type="project" value="UniProtKB-SubCell"/>
</dbReference>
<dbReference type="GO" id="GO:0005525">
    <property type="term" value="F:GTP binding"/>
    <property type="evidence" value="ECO:0007669"/>
    <property type="project" value="UniProtKB-UniRule"/>
</dbReference>
<dbReference type="GO" id="GO:0003924">
    <property type="term" value="F:GTPase activity"/>
    <property type="evidence" value="ECO:0007669"/>
    <property type="project" value="UniProtKB-UniRule"/>
</dbReference>
<dbReference type="GO" id="GO:0046872">
    <property type="term" value="F:metal ion binding"/>
    <property type="evidence" value="ECO:0007669"/>
    <property type="project" value="UniProtKB-KW"/>
</dbReference>
<dbReference type="GO" id="GO:0019843">
    <property type="term" value="F:rRNA binding"/>
    <property type="evidence" value="ECO:0007669"/>
    <property type="project" value="UniProtKB-KW"/>
</dbReference>
<dbReference type="GO" id="GO:0042274">
    <property type="term" value="P:ribosomal small subunit biogenesis"/>
    <property type="evidence" value="ECO:0007669"/>
    <property type="project" value="UniProtKB-UniRule"/>
</dbReference>
<dbReference type="CDD" id="cd01854">
    <property type="entry name" value="YjeQ_EngC"/>
    <property type="match status" value="1"/>
</dbReference>
<dbReference type="FunFam" id="1.10.40.50:FF:000001">
    <property type="entry name" value="Small ribosomal subunit biogenesis GTPase RsgA"/>
    <property type="match status" value="1"/>
</dbReference>
<dbReference type="FunFam" id="2.40.50.140:FF:000122">
    <property type="entry name" value="Small ribosomal subunit biogenesis GTPase RsgA"/>
    <property type="match status" value="1"/>
</dbReference>
<dbReference type="FunFam" id="3.40.50.300:FF:000389">
    <property type="entry name" value="Small ribosomal subunit biogenesis GTPase RsgA"/>
    <property type="match status" value="1"/>
</dbReference>
<dbReference type="Gene3D" id="2.40.50.140">
    <property type="entry name" value="Nucleic acid-binding proteins"/>
    <property type="match status" value="1"/>
</dbReference>
<dbReference type="Gene3D" id="3.40.50.300">
    <property type="entry name" value="P-loop containing nucleotide triphosphate hydrolases"/>
    <property type="match status" value="1"/>
</dbReference>
<dbReference type="Gene3D" id="1.10.40.50">
    <property type="entry name" value="Probable gtpase engc, domain 3"/>
    <property type="match status" value="1"/>
</dbReference>
<dbReference type="HAMAP" id="MF_01820">
    <property type="entry name" value="GTPase_RsgA"/>
    <property type="match status" value="1"/>
</dbReference>
<dbReference type="InterPro" id="IPR030378">
    <property type="entry name" value="G_CP_dom"/>
</dbReference>
<dbReference type="InterPro" id="IPR012340">
    <property type="entry name" value="NA-bd_OB-fold"/>
</dbReference>
<dbReference type="InterPro" id="IPR027417">
    <property type="entry name" value="P-loop_NTPase"/>
</dbReference>
<dbReference type="InterPro" id="IPR004881">
    <property type="entry name" value="Ribosome_biogen_GTPase_RsgA"/>
</dbReference>
<dbReference type="InterPro" id="IPR010914">
    <property type="entry name" value="RsgA_GTPase_dom"/>
</dbReference>
<dbReference type="NCBIfam" id="NF008931">
    <property type="entry name" value="PRK12288.1"/>
    <property type="match status" value="1"/>
</dbReference>
<dbReference type="NCBIfam" id="TIGR00157">
    <property type="entry name" value="ribosome small subunit-dependent GTPase A"/>
    <property type="match status" value="1"/>
</dbReference>
<dbReference type="PANTHER" id="PTHR32120">
    <property type="entry name" value="SMALL RIBOSOMAL SUBUNIT BIOGENESIS GTPASE RSGA"/>
    <property type="match status" value="1"/>
</dbReference>
<dbReference type="PANTHER" id="PTHR32120:SF11">
    <property type="entry name" value="SMALL RIBOSOMAL SUBUNIT BIOGENESIS GTPASE RSGA 1, MITOCHONDRIAL-RELATED"/>
    <property type="match status" value="1"/>
</dbReference>
<dbReference type="Pfam" id="PF03193">
    <property type="entry name" value="RsgA_GTPase"/>
    <property type="match status" value="1"/>
</dbReference>
<dbReference type="SUPFAM" id="SSF52540">
    <property type="entry name" value="P-loop containing nucleoside triphosphate hydrolases"/>
    <property type="match status" value="1"/>
</dbReference>
<dbReference type="PROSITE" id="PS50936">
    <property type="entry name" value="ENGC_GTPASE"/>
    <property type="match status" value="1"/>
</dbReference>
<dbReference type="PROSITE" id="PS51721">
    <property type="entry name" value="G_CP"/>
    <property type="match status" value="1"/>
</dbReference>
<evidence type="ECO:0000255" key="1">
    <source>
        <dbReference type="HAMAP-Rule" id="MF_01820"/>
    </source>
</evidence>
<evidence type="ECO:0000255" key="2">
    <source>
        <dbReference type="PROSITE-ProRule" id="PRU01058"/>
    </source>
</evidence>
<evidence type="ECO:0000256" key="3">
    <source>
        <dbReference type="SAM" id="MobiDB-lite"/>
    </source>
</evidence>
<proteinExistence type="inferred from homology"/>
<feature type="chain" id="PRO_1000188070" description="Small ribosomal subunit biogenesis GTPase RsgA">
    <location>
        <begin position="1"/>
        <end position="350"/>
    </location>
</feature>
<feature type="domain" description="CP-type G" evidence="2">
    <location>
        <begin position="104"/>
        <end position="273"/>
    </location>
</feature>
<feature type="region of interest" description="Disordered" evidence="3">
    <location>
        <begin position="1"/>
        <end position="33"/>
    </location>
</feature>
<feature type="compositionally biased region" description="Polar residues" evidence="3">
    <location>
        <begin position="1"/>
        <end position="17"/>
    </location>
</feature>
<feature type="binding site" evidence="1">
    <location>
        <begin position="160"/>
        <end position="163"/>
    </location>
    <ligand>
        <name>GTP</name>
        <dbReference type="ChEBI" id="CHEBI:37565"/>
    </ligand>
</feature>
<feature type="binding site" evidence="1">
    <location>
        <begin position="214"/>
        <end position="222"/>
    </location>
    <ligand>
        <name>GTP</name>
        <dbReference type="ChEBI" id="CHEBI:37565"/>
    </ligand>
</feature>
<feature type="binding site" evidence="1">
    <location>
        <position position="297"/>
    </location>
    <ligand>
        <name>Zn(2+)</name>
        <dbReference type="ChEBI" id="CHEBI:29105"/>
    </ligand>
</feature>
<feature type="binding site" evidence="1">
    <location>
        <position position="302"/>
    </location>
    <ligand>
        <name>Zn(2+)</name>
        <dbReference type="ChEBI" id="CHEBI:29105"/>
    </ligand>
</feature>
<feature type="binding site" evidence="1">
    <location>
        <position position="304"/>
    </location>
    <ligand>
        <name>Zn(2+)</name>
        <dbReference type="ChEBI" id="CHEBI:29105"/>
    </ligand>
</feature>
<feature type="binding site" evidence="1">
    <location>
        <position position="310"/>
    </location>
    <ligand>
        <name>Zn(2+)</name>
        <dbReference type="ChEBI" id="CHEBI:29105"/>
    </ligand>
</feature>
<organism>
    <name type="scientific">Escherichia coli O9:H4 (strain HS)</name>
    <dbReference type="NCBI Taxonomy" id="331112"/>
    <lineage>
        <taxon>Bacteria</taxon>
        <taxon>Pseudomonadati</taxon>
        <taxon>Pseudomonadota</taxon>
        <taxon>Gammaproteobacteria</taxon>
        <taxon>Enterobacterales</taxon>
        <taxon>Enterobacteriaceae</taxon>
        <taxon>Escherichia</taxon>
    </lineage>
</organism>
<gene>
    <name evidence="1" type="primary">rsgA</name>
    <name type="ordered locus">EcHS_A4404</name>
</gene>
<accession>A8A7Q8</accession>
<comment type="function">
    <text evidence="1">One of several proteins that assist in the late maturation steps of the functional core of the 30S ribosomal subunit. Helps release RbfA from mature subunits. May play a role in the assembly of ribosomal proteins into the subunit. Circularly permuted GTPase that catalyzes slow GTP hydrolysis, GTPase activity is stimulated by the 30S ribosomal subunit.</text>
</comment>
<comment type="cofactor">
    <cofactor evidence="1">
        <name>Zn(2+)</name>
        <dbReference type="ChEBI" id="CHEBI:29105"/>
    </cofactor>
    <text evidence="1">Binds 1 zinc ion per subunit.</text>
</comment>
<comment type="subunit">
    <text evidence="1">Monomer. Associates with 30S ribosomal subunit, binds 16S rRNA.</text>
</comment>
<comment type="subcellular location">
    <subcellularLocation>
        <location evidence="1">Cytoplasm</location>
    </subcellularLocation>
</comment>
<comment type="similarity">
    <text evidence="1">Belongs to the TRAFAC class YlqF/YawG GTPase family. RsgA subfamily.</text>
</comment>
<protein>
    <recommendedName>
        <fullName evidence="1">Small ribosomal subunit biogenesis GTPase RsgA</fullName>
        <ecNumber evidence="1">3.6.1.-</ecNumber>
    </recommendedName>
</protein>
<sequence length="350" mass="39179">MSKNKLSKGQQRRVNANHQRRLKTSKEKPDYDDNLFGEPDEGIVISRFGMHADVESADGDVHRCNIRRTIRSLVTGDRVVWRPGKPAAEGVNVKGIVEAVHERTSVLTRPDFYDGVKPIAANIDQIVIVSAILPELSLNIIDRYLVACETLQIEPIIVLNKIDLLDDEGMAFVNEQMDIYRNIGYRVLMVSSHTQDGLKPLEEALTGRISIFAGQSGVGKSSLLNALLGLQKEILTNDVSDNSGLGQHTTTAARLYHFPHGGDVIDSPGVREFGLWHLEPEQITQGFVEFHDYLGLCKYRDCKHDTDPGCAIREAVEEGKIAETRFENYHRILESMAQVKTRKNFSDTDD</sequence>